<reference key="1">
    <citation type="submission" date="2005-08" db="EMBL/GenBank/DDBJ databases">
        <authorList>
            <consortium name="NIH - Mammalian Gene Collection (MGC) project"/>
        </authorList>
    </citation>
    <scope>NUCLEOTIDE SEQUENCE [LARGE SCALE MRNA]</scope>
    <source>
        <strain>Hereford</strain>
        <tissue>Hypothalamus</tissue>
    </source>
</reference>
<dbReference type="EMBL" id="BC103141">
    <property type="protein sequence ID" value="AAI03142.1"/>
    <property type="molecule type" value="mRNA"/>
</dbReference>
<dbReference type="RefSeq" id="NP_001069596.1">
    <property type="nucleotide sequence ID" value="NM_001076128.1"/>
</dbReference>
<dbReference type="RefSeq" id="XP_024850229.1">
    <property type="nucleotide sequence ID" value="XM_024994461.2"/>
</dbReference>
<dbReference type="RefSeq" id="XP_024850230.1">
    <property type="nucleotide sequence ID" value="XM_024994462.2"/>
</dbReference>
<dbReference type="RefSeq" id="XP_024850232.1">
    <property type="nucleotide sequence ID" value="XM_024994464.2"/>
</dbReference>
<dbReference type="RefSeq" id="XP_024850233.1">
    <property type="nucleotide sequence ID" value="XM_024994465.2"/>
</dbReference>
<dbReference type="RefSeq" id="XP_059744305.1">
    <property type="nucleotide sequence ID" value="XM_059888322.1"/>
</dbReference>
<dbReference type="FunCoup" id="Q3ZBS1">
    <property type="interactions" value="300"/>
</dbReference>
<dbReference type="STRING" id="9913.ENSBTAP00000063573"/>
<dbReference type="PaxDb" id="9913-ENSBTAP00000055335"/>
<dbReference type="Ensembl" id="ENSBTAT00000083647.2">
    <property type="protein sequence ID" value="ENSBTAP00000063573.1"/>
    <property type="gene ID" value="ENSBTAG00000055286.2"/>
</dbReference>
<dbReference type="Ensembl" id="ENSBTAT00000092594.1">
    <property type="protein sequence ID" value="ENSBTAP00000103452.1"/>
    <property type="gene ID" value="ENSBTAG00000055286.2"/>
</dbReference>
<dbReference type="Ensembl" id="ENSBTAT00000095695.1">
    <property type="protein sequence ID" value="ENSBTAP00000093633.1"/>
    <property type="gene ID" value="ENSBTAG00000055286.2"/>
</dbReference>
<dbReference type="Ensembl" id="ENSBTAT00000099878.1">
    <property type="protein sequence ID" value="ENSBTAP00000094958.1"/>
    <property type="gene ID" value="ENSBTAG00000055286.2"/>
</dbReference>
<dbReference type="Ensembl" id="ENSBTAT00000107951.1">
    <property type="protein sequence ID" value="ENSBTAP00000081124.1"/>
    <property type="gene ID" value="ENSBTAG00000055286.2"/>
</dbReference>
<dbReference type="Ensembl" id="ENSBTAT00000111447.1">
    <property type="protein sequence ID" value="ENSBTAP00000100780.1"/>
    <property type="gene ID" value="ENSBTAG00000055286.2"/>
</dbReference>
<dbReference type="Ensembl" id="ENSBTAT00000116268.1">
    <property type="protein sequence ID" value="ENSBTAP00000087921.1"/>
    <property type="gene ID" value="ENSBTAG00000055286.2"/>
</dbReference>
<dbReference type="Ensembl" id="ENSBTAT00000135244.1">
    <property type="protein sequence ID" value="ENSBTAP00000088758.1"/>
    <property type="gene ID" value="ENSBTAG00000055286.2"/>
</dbReference>
<dbReference type="GeneID" id="538782"/>
<dbReference type="KEGG" id="bta:538782"/>
<dbReference type="CTD" id="90355"/>
<dbReference type="VEuPathDB" id="HostDB:ENSBTAG00000055286"/>
<dbReference type="VGNC" id="VGNC:52734">
    <property type="gene designation" value="MACIR"/>
</dbReference>
<dbReference type="eggNOG" id="ENOG502QRGS">
    <property type="taxonomic scope" value="Eukaryota"/>
</dbReference>
<dbReference type="GeneTree" id="ENSGT00390000005782"/>
<dbReference type="HOGENOM" id="CLU_082309_0_0_1"/>
<dbReference type="InParanoid" id="Q3ZBS1"/>
<dbReference type="OMA" id="LAHKCTG"/>
<dbReference type="OrthoDB" id="9859373at2759"/>
<dbReference type="TreeFam" id="TF331553"/>
<dbReference type="Proteomes" id="UP000009136">
    <property type="component" value="Chromosome 7"/>
</dbReference>
<dbReference type="Bgee" id="ENSBTAG00000055286">
    <property type="expression patterns" value="Expressed in occipital lobe and 104 other cell types or tissues"/>
</dbReference>
<dbReference type="GO" id="GO:0035869">
    <property type="term" value="C:ciliary transition zone"/>
    <property type="evidence" value="ECO:0000250"/>
    <property type="project" value="UniProtKB"/>
</dbReference>
<dbReference type="GO" id="GO:0005737">
    <property type="term" value="C:cytoplasm"/>
    <property type="evidence" value="ECO:0000250"/>
    <property type="project" value="UniProtKB"/>
</dbReference>
<dbReference type="GO" id="GO:0060271">
    <property type="term" value="P:cilium assembly"/>
    <property type="evidence" value="ECO:0000250"/>
    <property type="project" value="UniProtKB"/>
</dbReference>
<dbReference type="GO" id="GO:0010631">
    <property type="term" value="P:epithelial cell migration"/>
    <property type="evidence" value="ECO:0007669"/>
    <property type="project" value="Ensembl"/>
</dbReference>
<dbReference type="GO" id="GO:0010761">
    <property type="term" value="P:fibroblast migration"/>
    <property type="evidence" value="ECO:0007669"/>
    <property type="project" value="Ensembl"/>
</dbReference>
<dbReference type="GO" id="GO:0006954">
    <property type="term" value="P:inflammatory response"/>
    <property type="evidence" value="ECO:0007669"/>
    <property type="project" value="UniProtKB-KW"/>
</dbReference>
<dbReference type="GO" id="GO:1900016">
    <property type="term" value="P:negative regulation of cytokine production involved in inflammatory response"/>
    <property type="evidence" value="ECO:0000318"/>
    <property type="project" value="GO_Central"/>
</dbReference>
<dbReference type="GO" id="GO:0010633">
    <property type="term" value="P:negative regulation of epithelial cell migration"/>
    <property type="evidence" value="ECO:0007669"/>
    <property type="project" value="Ensembl"/>
</dbReference>
<dbReference type="GO" id="GO:0010764">
    <property type="term" value="P:negative regulation of fibroblast migration"/>
    <property type="evidence" value="ECO:0000318"/>
    <property type="project" value="GO_Central"/>
</dbReference>
<dbReference type="GO" id="GO:0050728">
    <property type="term" value="P:negative regulation of inflammatory response"/>
    <property type="evidence" value="ECO:0000250"/>
    <property type="project" value="UniProtKB"/>
</dbReference>
<dbReference type="GO" id="GO:0015031">
    <property type="term" value="P:protein transport"/>
    <property type="evidence" value="ECO:0007669"/>
    <property type="project" value="UniProtKB-KW"/>
</dbReference>
<dbReference type="InterPro" id="IPR029219">
    <property type="entry name" value="UNC119-bd"/>
</dbReference>
<dbReference type="PANTHER" id="PTHR31224:SF2">
    <property type="entry name" value="MACROPHAGE IMMUNOMETABOLISM REGULATOR"/>
    <property type="match status" value="1"/>
</dbReference>
<dbReference type="PANTHER" id="PTHR31224">
    <property type="entry name" value="UNC119-BINDING PROTEIN C5ORF30"/>
    <property type="match status" value="1"/>
</dbReference>
<dbReference type="Pfam" id="PF15435">
    <property type="entry name" value="UNC119_bdg"/>
    <property type="match status" value="1"/>
</dbReference>
<proteinExistence type="evidence at transcript level"/>
<keyword id="KW-0007">Acetylation</keyword>
<keyword id="KW-0966">Cell projection</keyword>
<keyword id="KW-0969">Cilium</keyword>
<keyword id="KW-0970">Cilium biogenesis/degradation</keyword>
<keyword id="KW-0963">Cytoplasm</keyword>
<keyword id="KW-0395">Inflammatory response</keyword>
<keyword id="KW-0597">Phosphoprotein</keyword>
<keyword id="KW-0653">Protein transport</keyword>
<keyword id="KW-1185">Reference proteome</keyword>
<keyword id="KW-0813">Transport</keyword>
<evidence type="ECO:0000250" key="1">
    <source>
        <dbReference type="UniProtKB" id="Q96GV9"/>
    </source>
</evidence>
<evidence type="ECO:0000256" key="2">
    <source>
        <dbReference type="SAM" id="MobiDB-lite"/>
    </source>
</evidence>
<evidence type="ECO:0000305" key="3"/>
<name>MACIR_BOVIN</name>
<protein>
    <recommendedName>
        <fullName>Macrophage immunometabolism regulator</fullName>
    </recommendedName>
</protein>
<feature type="chain" id="PRO_0000316775" description="Macrophage immunometabolism regulator">
    <location>
        <begin position="1"/>
        <end position="207"/>
    </location>
</feature>
<feature type="region of interest" description="Disordered" evidence="2">
    <location>
        <begin position="1"/>
        <end position="41"/>
    </location>
</feature>
<feature type="modified residue" description="N-acetylmethionine" evidence="1">
    <location>
        <position position="1"/>
    </location>
</feature>
<feature type="modified residue" description="Phosphoserine" evidence="1">
    <location>
        <position position="25"/>
    </location>
</feature>
<feature type="modified residue" description="Phosphoserine" evidence="1">
    <location>
        <position position="140"/>
    </location>
</feature>
<feature type="modified residue" description="Phosphoserine" evidence="1">
    <location>
        <position position="167"/>
    </location>
</feature>
<organism>
    <name type="scientific">Bos taurus</name>
    <name type="common">Bovine</name>
    <dbReference type="NCBI Taxonomy" id="9913"/>
    <lineage>
        <taxon>Eukaryota</taxon>
        <taxon>Metazoa</taxon>
        <taxon>Chordata</taxon>
        <taxon>Craniata</taxon>
        <taxon>Vertebrata</taxon>
        <taxon>Euteleostomi</taxon>
        <taxon>Mammalia</taxon>
        <taxon>Eutheria</taxon>
        <taxon>Laurasiatheria</taxon>
        <taxon>Artiodactyla</taxon>
        <taxon>Ruminantia</taxon>
        <taxon>Pecora</taxon>
        <taxon>Bovidae</taxon>
        <taxon>Bovinae</taxon>
        <taxon>Bos</taxon>
    </lineage>
</organism>
<gene>
    <name type="primary">MACIR</name>
</gene>
<accession>Q3ZBS1</accession>
<sequence>MEVDVNGESRSALTTLPLPVAEASSPGKAEAEKPRCSSTPCSPMRRTVSGYQILHMDSNYLVGFTTGEELLKLAQKCTGAEESKGEAVPSLRSKQLDVGLARSSRLYKTRSRYYQPYEIPAVNGRRRRRMPSSGDKCTKSLPYEPYKALHGPLPLCLLKGKRAHSKSLDYLNLDKMNIKEPADTEVLQYQLQHLTLRGDRVFARNNT</sequence>
<comment type="function">
    <text evidence="1">Regulates the macrophage function, by enhancing the resolution of inflammation and wound repair functions mediated by M2 macrophages. The regulation of macrophage function is, due at least in part, to its ability to inhibit glycolysis. May play also a role in trafficking of proteins via its interaction with UNC119 and UNC119B cargo adapters: may help the release of UNC119 and UNC119B cargo or the recycling of UNC119 and UNC119B. May play a role in ciliary membrane localization via its interaction with UNC119B and protein transport into photoreceptor cells.</text>
</comment>
<comment type="subunit">
    <text evidence="1">Interacts with UNC119 and UNC119B; interaction preferentially takes place when UNC119 and UNC119B are unliganded with myristoylated proteins.</text>
</comment>
<comment type="subcellular location">
    <subcellularLocation>
        <location evidence="1">Cytoplasm</location>
    </subcellularLocation>
    <subcellularLocation>
        <location evidence="1">Cell projection</location>
        <location evidence="1">Cilium</location>
    </subcellularLocation>
    <text evidence="1">Localizes to the transition zone and proximal cilium in addition to being found throughout the cytoplasm.</text>
</comment>
<comment type="similarity">
    <text evidence="3">Belongs to the UNC119-binding protein family.</text>
</comment>